<keyword id="KW-0349">Heme</keyword>
<keyword id="KW-0376">Hydrogen peroxide</keyword>
<keyword id="KW-0408">Iron</keyword>
<keyword id="KW-0479">Metal-binding</keyword>
<keyword id="KW-0560">Oxidoreductase</keyword>
<keyword id="KW-0575">Peroxidase</keyword>
<evidence type="ECO:0000255" key="1">
    <source>
        <dbReference type="HAMAP-Rule" id="MF_01961"/>
    </source>
</evidence>
<evidence type="ECO:0000256" key="2">
    <source>
        <dbReference type="SAM" id="MobiDB-lite"/>
    </source>
</evidence>
<comment type="function">
    <text evidence="1">Bifunctional enzyme with both catalase and broad-spectrum peroxidase activity.</text>
</comment>
<comment type="catalytic activity">
    <reaction evidence="1">
        <text>H2O2 + AH2 = A + 2 H2O</text>
        <dbReference type="Rhea" id="RHEA:30275"/>
        <dbReference type="ChEBI" id="CHEBI:13193"/>
        <dbReference type="ChEBI" id="CHEBI:15377"/>
        <dbReference type="ChEBI" id="CHEBI:16240"/>
        <dbReference type="ChEBI" id="CHEBI:17499"/>
        <dbReference type="EC" id="1.11.1.21"/>
    </reaction>
</comment>
<comment type="catalytic activity">
    <reaction evidence="1">
        <text>2 H2O2 = O2 + 2 H2O</text>
        <dbReference type="Rhea" id="RHEA:20309"/>
        <dbReference type="ChEBI" id="CHEBI:15377"/>
        <dbReference type="ChEBI" id="CHEBI:15379"/>
        <dbReference type="ChEBI" id="CHEBI:16240"/>
        <dbReference type="EC" id="1.11.1.21"/>
    </reaction>
</comment>
<comment type="cofactor">
    <cofactor evidence="1">
        <name>heme b</name>
        <dbReference type="ChEBI" id="CHEBI:60344"/>
    </cofactor>
    <text evidence="1">Binds 1 heme b (iron(II)-protoporphyrin IX) group per dimer.</text>
</comment>
<comment type="subunit">
    <text evidence="1">Homodimer or homotetramer.</text>
</comment>
<comment type="PTM">
    <text evidence="1">Formation of the three residue Trp-Tyr-Met cross-link is important for the catalase, but not the peroxidase activity of the enzyme.</text>
</comment>
<comment type="similarity">
    <text evidence="1">Belongs to the peroxidase family. Peroxidase/catalase subfamily.</text>
</comment>
<dbReference type="EC" id="1.11.1.21" evidence="1"/>
<dbReference type="EMBL" id="CP000712">
    <property type="protein sequence ID" value="ABQ78201.1"/>
    <property type="molecule type" value="Genomic_DNA"/>
</dbReference>
<dbReference type="SMR" id="A5W241"/>
<dbReference type="PeroxiBase" id="3621">
    <property type="entry name" value="PpuCP01_F1"/>
</dbReference>
<dbReference type="KEGG" id="ppf:Pput_2061"/>
<dbReference type="eggNOG" id="COG0376">
    <property type="taxonomic scope" value="Bacteria"/>
</dbReference>
<dbReference type="HOGENOM" id="CLU_025424_2_0_6"/>
<dbReference type="GO" id="GO:0005829">
    <property type="term" value="C:cytosol"/>
    <property type="evidence" value="ECO:0007669"/>
    <property type="project" value="TreeGrafter"/>
</dbReference>
<dbReference type="GO" id="GO:0004096">
    <property type="term" value="F:catalase activity"/>
    <property type="evidence" value="ECO:0007669"/>
    <property type="project" value="UniProtKB-UniRule"/>
</dbReference>
<dbReference type="GO" id="GO:0020037">
    <property type="term" value="F:heme binding"/>
    <property type="evidence" value="ECO:0007669"/>
    <property type="project" value="InterPro"/>
</dbReference>
<dbReference type="GO" id="GO:0046872">
    <property type="term" value="F:metal ion binding"/>
    <property type="evidence" value="ECO:0007669"/>
    <property type="project" value="UniProtKB-KW"/>
</dbReference>
<dbReference type="GO" id="GO:0070301">
    <property type="term" value="P:cellular response to hydrogen peroxide"/>
    <property type="evidence" value="ECO:0007669"/>
    <property type="project" value="TreeGrafter"/>
</dbReference>
<dbReference type="GO" id="GO:0042744">
    <property type="term" value="P:hydrogen peroxide catabolic process"/>
    <property type="evidence" value="ECO:0007669"/>
    <property type="project" value="UniProtKB-KW"/>
</dbReference>
<dbReference type="CDD" id="cd00649">
    <property type="entry name" value="catalase_peroxidase_1"/>
    <property type="match status" value="1"/>
</dbReference>
<dbReference type="CDD" id="cd08200">
    <property type="entry name" value="catalase_peroxidase_2"/>
    <property type="match status" value="1"/>
</dbReference>
<dbReference type="FunFam" id="1.10.420.10:FF:000004">
    <property type="entry name" value="Catalase-peroxidase"/>
    <property type="match status" value="1"/>
</dbReference>
<dbReference type="FunFam" id="1.10.520.10:FF:000002">
    <property type="entry name" value="Catalase-peroxidase"/>
    <property type="match status" value="1"/>
</dbReference>
<dbReference type="Gene3D" id="1.10.520.10">
    <property type="match status" value="2"/>
</dbReference>
<dbReference type="Gene3D" id="1.10.420.10">
    <property type="entry name" value="Peroxidase, domain 2"/>
    <property type="match status" value="2"/>
</dbReference>
<dbReference type="HAMAP" id="MF_01961">
    <property type="entry name" value="Catal_peroxid"/>
    <property type="match status" value="1"/>
</dbReference>
<dbReference type="InterPro" id="IPR000763">
    <property type="entry name" value="Catalase_peroxidase"/>
</dbReference>
<dbReference type="InterPro" id="IPR002016">
    <property type="entry name" value="Haem_peroxidase"/>
</dbReference>
<dbReference type="InterPro" id="IPR010255">
    <property type="entry name" value="Haem_peroxidase_sf"/>
</dbReference>
<dbReference type="InterPro" id="IPR019794">
    <property type="entry name" value="Peroxidases_AS"/>
</dbReference>
<dbReference type="InterPro" id="IPR019793">
    <property type="entry name" value="Peroxidases_heam-ligand_BS"/>
</dbReference>
<dbReference type="NCBIfam" id="TIGR00198">
    <property type="entry name" value="cat_per_HPI"/>
    <property type="match status" value="1"/>
</dbReference>
<dbReference type="NCBIfam" id="NF011635">
    <property type="entry name" value="PRK15061.1"/>
    <property type="match status" value="1"/>
</dbReference>
<dbReference type="PANTHER" id="PTHR30555:SF0">
    <property type="entry name" value="CATALASE-PEROXIDASE"/>
    <property type="match status" value="1"/>
</dbReference>
<dbReference type="PANTHER" id="PTHR30555">
    <property type="entry name" value="HYDROPEROXIDASE I, BIFUNCTIONAL CATALASE-PEROXIDASE"/>
    <property type="match status" value="1"/>
</dbReference>
<dbReference type="Pfam" id="PF00141">
    <property type="entry name" value="peroxidase"/>
    <property type="match status" value="2"/>
</dbReference>
<dbReference type="PRINTS" id="PR00460">
    <property type="entry name" value="BPEROXIDASE"/>
</dbReference>
<dbReference type="PRINTS" id="PR00458">
    <property type="entry name" value="PEROXIDASE"/>
</dbReference>
<dbReference type="SUPFAM" id="SSF48113">
    <property type="entry name" value="Heme-dependent peroxidases"/>
    <property type="match status" value="2"/>
</dbReference>
<dbReference type="PROSITE" id="PS00435">
    <property type="entry name" value="PEROXIDASE_1"/>
    <property type="match status" value="1"/>
</dbReference>
<dbReference type="PROSITE" id="PS00436">
    <property type="entry name" value="PEROXIDASE_2"/>
    <property type="match status" value="1"/>
</dbReference>
<dbReference type="PROSITE" id="PS50873">
    <property type="entry name" value="PEROXIDASE_4"/>
    <property type="match status" value="1"/>
</dbReference>
<protein>
    <recommendedName>
        <fullName evidence="1">Catalase-peroxidase</fullName>
        <shortName evidence="1">CP</shortName>
        <ecNumber evidence="1">1.11.1.21</ecNumber>
    </recommendedName>
    <alternativeName>
        <fullName evidence="1">Peroxidase/catalase</fullName>
    </alternativeName>
</protein>
<gene>
    <name evidence="1" type="primary">katG</name>
    <name type="ordered locus">Pput_2061</name>
</gene>
<name>KATG_PSEP1</name>
<sequence length="751" mass="82006">MSNESKCPFHQTAGGGTTNRDWWPDQLNLRILHQHSSKSSPDPDFDYAKAFKSLDFQALKKDLTALMTDSQDWWPADFGHYGPLFIRMAWHSAGTYRIGDGRGGAGSGQQRFAPLNSWPDNVSLDKARRLLWPIKQKYGNKISWADLIVLTGNVALESMGFKTFGFSGGRADVWEPDEDVYWGSEKVWLGGDTRYGKDQVKAQPPGQGDLVAEPAKHGEEQNRDLSAERNLENPLAAVQMGLIYVNPEGPEGNPDPVASGKDIRETFGRMAMNDEETVALIAGGHAFGKTHGAGPADNVGPEPEAAGLEMQGLGWHNTFGSGKGGDTITSGLEVTWTSTPTRWSNEYLNNLFDFEWELTKSPAGAHQWRPKEGKGAGTVPDAHDPGKKHAPSMLTSDLALRFDPIYAPIARRFKDNPEQLADAFARAWYKLIHRDMGPLARYLGPEMPNEELLWQDPLPKADPSTISEQDIATLKSRILASGLSVGELVSTAWASASTFRGSDKRGGANGARLRLAPQKDWAANQGVDKVLAALEKIRGEFNNGGKKVSLADLIVLAGTAAVEKAAKDAGYSGSVGFRPGRVDASQEQTDVESFAVLEPLADGFRNFTKARYSVKAEKLLLDKAQLLTLTAPELTVLIGGLRVLGANHGGSNLGVFTDKPGTLSNDFFRNLLDMSVEWKPTSADNETFEGRDRKTGQVKWSGSRVDLVFGSHAQLRALSEVYGSSDGGDKFVRDFVAAWQKVMELDRFDLK</sequence>
<accession>A5W241</accession>
<proteinExistence type="inferred from homology"/>
<organism>
    <name type="scientific">Pseudomonas putida (strain ATCC 700007 / DSM 6899 / JCM 31910 / BCRC 17059 / LMG 24140 / F1)</name>
    <dbReference type="NCBI Taxonomy" id="351746"/>
    <lineage>
        <taxon>Bacteria</taxon>
        <taxon>Pseudomonadati</taxon>
        <taxon>Pseudomonadota</taxon>
        <taxon>Gammaproteobacteria</taxon>
        <taxon>Pseudomonadales</taxon>
        <taxon>Pseudomonadaceae</taxon>
        <taxon>Pseudomonas</taxon>
    </lineage>
</organism>
<feature type="chain" id="PRO_0000354866" description="Catalase-peroxidase">
    <location>
        <begin position="1"/>
        <end position="751"/>
    </location>
</feature>
<feature type="region of interest" description="Disordered" evidence="2">
    <location>
        <begin position="1"/>
        <end position="21"/>
    </location>
</feature>
<feature type="region of interest" description="Disordered" evidence="2">
    <location>
        <begin position="195"/>
        <end position="227"/>
    </location>
</feature>
<feature type="region of interest" description="Disordered" evidence="2">
    <location>
        <begin position="365"/>
        <end position="387"/>
    </location>
</feature>
<feature type="compositionally biased region" description="Basic and acidic residues" evidence="2">
    <location>
        <begin position="214"/>
        <end position="227"/>
    </location>
</feature>
<feature type="active site" description="Proton acceptor" evidence="1">
    <location>
        <position position="91"/>
    </location>
</feature>
<feature type="binding site" description="axial binding residue" evidence="1">
    <location>
        <position position="285"/>
    </location>
    <ligand>
        <name>heme b</name>
        <dbReference type="ChEBI" id="CHEBI:60344"/>
    </ligand>
    <ligandPart>
        <name>Fe</name>
        <dbReference type="ChEBI" id="CHEBI:18248"/>
    </ligandPart>
</feature>
<feature type="site" description="Transition state stabilizer" evidence="1">
    <location>
        <position position="87"/>
    </location>
</feature>
<feature type="cross-link" description="Tryptophyl-tyrosyl-methioninium (Trp-Tyr) (with M-270)" evidence="1">
    <location>
        <begin position="90"/>
        <end position="244"/>
    </location>
</feature>
<feature type="cross-link" description="Tryptophyl-tyrosyl-methioninium (Tyr-Met) (with W-90)" evidence="1">
    <location>
        <begin position="244"/>
        <end position="270"/>
    </location>
</feature>
<reference key="1">
    <citation type="submission" date="2007-05" db="EMBL/GenBank/DDBJ databases">
        <title>Complete sequence of Pseudomonas putida F1.</title>
        <authorList>
            <consortium name="US DOE Joint Genome Institute"/>
            <person name="Copeland A."/>
            <person name="Lucas S."/>
            <person name="Lapidus A."/>
            <person name="Barry K."/>
            <person name="Detter J.C."/>
            <person name="Glavina del Rio T."/>
            <person name="Hammon N."/>
            <person name="Israni S."/>
            <person name="Dalin E."/>
            <person name="Tice H."/>
            <person name="Pitluck S."/>
            <person name="Chain P."/>
            <person name="Malfatti S."/>
            <person name="Shin M."/>
            <person name="Vergez L."/>
            <person name="Schmutz J."/>
            <person name="Larimer F."/>
            <person name="Land M."/>
            <person name="Hauser L."/>
            <person name="Kyrpides N."/>
            <person name="Lykidis A."/>
            <person name="Parales R."/>
            <person name="Richardson P."/>
        </authorList>
    </citation>
    <scope>NUCLEOTIDE SEQUENCE [LARGE SCALE GENOMIC DNA]</scope>
    <source>
        <strain>ATCC 700007 / DSM 6899 / JCM 31910 / BCRC 17059 / LMG 24140 / F1</strain>
    </source>
</reference>